<proteinExistence type="evidence at transcript level"/>
<evidence type="ECO:0000255" key="1"/>
<evidence type="ECO:0000255" key="2">
    <source>
        <dbReference type="PROSITE-ProRule" id="PRU00521"/>
    </source>
</evidence>
<evidence type="ECO:0000305" key="3"/>
<evidence type="ECO:0000312" key="4">
    <source>
        <dbReference type="MGI" id="MGI:2660716"/>
    </source>
</evidence>
<protein>
    <recommendedName>
        <fullName evidence="3">Olfactory receptor 10D1B</fullName>
    </recommendedName>
    <alternativeName>
        <fullName>Odorant receptor M31</fullName>
    </alternativeName>
    <alternativeName>
        <fullName>Olfactory receptor 149</fullName>
    </alternativeName>
    <alternativeName>
        <fullName>Olfactory receptor 224-8</fullName>
    </alternativeName>
    <alternativeName>
        <fullName>Olfactory receptor 7G</fullName>
    </alternativeName>
</protein>
<feature type="chain" id="PRO_0000150826" description="Olfactory receptor 10D1B">
    <location>
        <begin position="1"/>
        <end position="311"/>
    </location>
</feature>
<feature type="topological domain" description="Extracellular" evidence="1">
    <location>
        <begin position="1"/>
        <end position="24"/>
    </location>
</feature>
<feature type="transmembrane region" description="Helical; Name=1" evidence="1">
    <location>
        <begin position="25"/>
        <end position="45"/>
    </location>
</feature>
<feature type="topological domain" description="Cytoplasmic" evidence="1">
    <location>
        <begin position="46"/>
        <end position="54"/>
    </location>
</feature>
<feature type="transmembrane region" description="Helical; Name=2" evidence="1">
    <location>
        <begin position="55"/>
        <end position="75"/>
    </location>
</feature>
<feature type="topological domain" description="Extracellular" evidence="1">
    <location>
        <begin position="76"/>
        <end position="95"/>
    </location>
</feature>
<feature type="transmembrane region" description="Helical; Name=3" evidence="1">
    <location>
        <begin position="96"/>
        <end position="116"/>
    </location>
</feature>
<feature type="topological domain" description="Cytoplasmic" evidence="1">
    <location>
        <begin position="117"/>
        <end position="137"/>
    </location>
</feature>
<feature type="transmembrane region" description="Helical; Name=4" evidence="1">
    <location>
        <begin position="138"/>
        <end position="158"/>
    </location>
</feature>
<feature type="topological domain" description="Extracellular" evidence="1">
    <location>
        <begin position="159"/>
        <end position="192"/>
    </location>
</feature>
<feature type="transmembrane region" description="Helical; Name=5" evidence="1">
    <location>
        <begin position="193"/>
        <end position="213"/>
    </location>
</feature>
<feature type="topological domain" description="Cytoplasmic" evidence="1">
    <location>
        <begin position="214"/>
        <end position="237"/>
    </location>
</feature>
<feature type="transmembrane region" description="Helical; Name=6" evidence="1">
    <location>
        <begin position="238"/>
        <end position="258"/>
    </location>
</feature>
<feature type="topological domain" description="Extracellular" evidence="1">
    <location>
        <begin position="259"/>
        <end position="271"/>
    </location>
</feature>
<feature type="transmembrane region" description="Helical; Name=7" evidence="1">
    <location>
        <begin position="272"/>
        <end position="288"/>
    </location>
</feature>
<feature type="topological domain" description="Cytoplasmic" evidence="1">
    <location>
        <begin position="289"/>
        <end position="311"/>
    </location>
</feature>
<feature type="disulfide bond" evidence="2">
    <location>
        <begin position="95"/>
        <end position="187"/>
    </location>
</feature>
<feature type="sequence conflict" description="In Ref. 3 and 4." evidence="3" ref="3 4">
    <original>F</original>
    <variation>V</variation>
    <location>
        <position position="100"/>
    </location>
</feature>
<comment type="function">
    <text evidence="3">Odorant receptor.</text>
</comment>
<comment type="subcellular location">
    <subcellularLocation>
        <location evidence="3">Cell membrane</location>
        <topology evidence="1">Multi-pass membrane protein</topology>
    </subcellularLocation>
</comment>
<comment type="similarity">
    <text evidence="2">Belongs to the G-protein coupled receptor 1 family.</text>
</comment>
<reference key="1">
    <citation type="journal article" date="2003" name="Genome Biol.">
        <title>Odorant receptor expressed sequence tags demonstrate olfactory expression of over 400 genes, extensive alternate splicing and unequal expression levels.</title>
        <authorList>
            <person name="Young J.M."/>
            <person name="Shykind B.M."/>
            <person name="Lane R.P."/>
            <person name="Tonnes-Priddy L."/>
            <person name="Ross J.A."/>
            <person name="Walker M."/>
            <person name="Williams E.M."/>
            <person name="Trask B.J."/>
        </authorList>
    </citation>
    <scope>NUCLEOTIDE SEQUENCE [GENOMIC DNA]</scope>
</reference>
<reference key="2">
    <citation type="journal article" date="2004" name="Genome Res.">
        <title>The status, quality, and expansion of the NIH full-length cDNA project: the Mammalian Gene Collection (MGC).</title>
        <authorList>
            <consortium name="The MGC Project Team"/>
        </authorList>
    </citation>
    <scope>NUCLEOTIDE SEQUENCE [LARGE SCALE MRNA]</scope>
    <source>
        <tissue>Brain</tissue>
    </source>
</reference>
<reference key="3">
    <citation type="journal article" date="2002" name="Nat. Neurosci.">
        <title>The olfactory receptor gene superfamily of the mouse.</title>
        <authorList>
            <person name="Zhang X."/>
            <person name="Firestein S."/>
        </authorList>
    </citation>
    <scope>NUCLEOTIDE SEQUENCE [GENOMIC DNA] OF 91-311</scope>
</reference>
<reference key="4">
    <citation type="journal article" date="2002" name="Hum. Mol. Genet.">
        <title>Different evolutionary processes shaped the mouse and human olfactory receptor gene families.</title>
        <authorList>
            <person name="Young J.M."/>
            <person name="Friedman C."/>
            <person name="Williams E.M."/>
            <person name="Ross J.A."/>
            <person name="Tonnes-Priddy L."/>
            <person name="Trask B.J."/>
        </authorList>
    </citation>
    <scope>NUCLEOTIDE SEQUENCE [GENOMIC DNA] OF 91-311</scope>
</reference>
<reference key="5">
    <citation type="journal article" date="2002" name="Hum. Mol. Genet.">
        <authorList>
            <person name="Young J.M."/>
            <person name="Friedman C."/>
            <person name="Williams E.M."/>
            <person name="Ross J.A."/>
            <person name="Tonnes-Priddy L."/>
            <person name="Trask B.J."/>
        </authorList>
    </citation>
    <scope>ERRATUM OF PUBMED:11875048</scope>
</reference>
<reference key="6">
    <citation type="journal article" date="1996" name="Proc. Natl. Acad. Sci. U.S.A.">
        <title>The chromosomal distribution of mouse odorant receptor genes.</title>
        <authorList>
            <person name="Sullivan S.L."/>
            <person name="Adamson M.C."/>
            <person name="Ressler K.J."/>
            <person name="Kozak C.A."/>
            <person name="Buck L.B."/>
        </authorList>
    </citation>
    <scope>NUCLEOTIDE SEQUENCE [GENOMIC DNA] OF 126-237</scope>
    <source>
        <strain>C57BL/6J</strain>
    </source>
</reference>
<accession>Q60888</accession>
<accession>B9EJ08</accession>
<accession>Q7TRA8</accession>
<accession>Q8VEP7</accession>
<dbReference type="EMBL" id="BC141260">
    <property type="protein sequence ID" value="AAI41261.1"/>
    <property type="molecule type" value="mRNA"/>
</dbReference>
<dbReference type="EMBL" id="AY318157">
    <property type="protein sequence ID" value="AAP71427.1"/>
    <property type="molecule type" value="Genomic_DNA"/>
</dbReference>
<dbReference type="EMBL" id="AY073853">
    <property type="protein sequence ID" value="AAL61516.1"/>
    <property type="molecule type" value="Genomic_DNA"/>
</dbReference>
<dbReference type="EMBL" id="U28777">
    <property type="protein sequence ID" value="AAC52400.1"/>
    <property type="molecule type" value="Genomic_DNA"/>
</dbReference>
<dbReference type="CCDS" id="CCDS23057.1"/>
<dbReference type="RefSeq" id="NP_997021.1">
    <property type="nucleotide sequence ID" value="NM_207138.1"/>
</dbReference>
<dbReference type="SMR" id="Q60888"/>
<dbReference type="FunCoup" id="Q60888">
    <property type="interactions" value="1152"/>
</dbReference>
<dbReference type="STRING" id="10090.ENSMUSP00000149664"/>
<dbReference type="GlyGen" id="Q60888">
    <property type="glycosylation" value="1 site"/>
</dbReference>
<dbReference type="PaxDb" id="10090-ENSMUSP00000080686"/>
<dbReference type="Ensembl" id="ENSMUST00000082027.3">
    <property type="protein sequence ID" value="ENSMUSP00000080686.3"/>
    <property type="gene ID" value="ENSMUSG00000062121.4"/>
</dbReference>
<dbReference type="Ensembl" id="ENSMUST00000215192.2">
    <property type="protein sequence ID" value="ENSMUSP00000149664.2"/>
    <property type="gene ID" value="ENSMUSG00000062121.4"/>
</dbReference>
<dbReference type="GeneID" id="235256"/>
<dbReference type="KEGG" id="mmu:235256"/>
<dbReference type="UCSC" id="uc009oyk.1">
    <property type="organism name" value="mouse"/>
</dbReference>
<dbReference type="AGR" id="MGI:2660716"/>
<dbReference type="AGR" id="RGD:1332791"/>
<dbReference type="CTD" id="235256"/>
<dbReference type="MGI" id="MGI:2660716">
    <property type="gene designation" value="Or10d1b"/>
</dbReference>
<dbReference type="VEuPathDB" id="HostDB:ENSMUSG00000062121"/>
<dbReference type="eggNOG" id="ENOG502SH9P">
    <property type="taxonomic scope" value="Eukaryota"/>
</dbReference>
<dbReference type="GeneTree" id="ENSGT01050000244869"/>
<dbReference type="HOGENOM" id="CLU_012526_8_1_1"/>
<dbReference type="InParanoid" id="Q60888"/>
<dbReference type="OMA" id="QVAFFPE"/>
<dbReference type="OrthoDB" id="5975390at2759"/>
<dbReference type="PhylomeDB" id="Q60888"/>
<dbReference type="TreeFam" id="TF336512"/>
<dbReference type="BioGRID-ORCS" id="235256">
    <property type="hits" value="2 hits in 69 CRISPR screens"/>
</dbReference>
<dbReference type="PRO" id="PR:Q60888"/>
<dbReference type="Proteomes" id="UP000000589">
    <property type="component" value="Chromosome 9"/>
</dbReference>
<dbReference type="RNAct" id="Q60888">
    <property type="molecule type" value="protein"/>
</dbReference>
<dbReference type="Bgee" id="ENSMUSG00000062121">
    <property type="expression patterns" value="Expressed in reproductive organ and 1 other cell type or tissue"/>
</dbReference>
<dbReference type="GO" id="GO:0016020">
    <property type="term" value="C:membrane"/>
    <property type="evidence" value="ECO:0000247"/>
    <property type="project" value="MGI"/>
</dbReference>
<dbReference type="GO" id="GO:0005886">
    <property type="term" value="C:plasma membrane"/>
    <property type="evidence" value="ECO:0007669"/>
    <property type="project" value="UniProtKB-SubCell"/>
</dbReference>
<dbReference type="GO" id="GO:0004930">
    <property type="term" value="F:G protein-coupled receptor activity"/>
    <property type="evidence" value="ECO:0007669"/>
    <property type="project" value="UniProtKB-KW"/>
</dbReference>
<dbReference type="GO" id="GO:0004984">
    <property type="term" value="F:olfactory receptor activity"/>
    <property type="evidence" value="ECO:0000247"/>
    <property type="project" value="MGI"/>
</dbReference>
<dbReference type="GO" id="GO:0007186">
    <property type="term" value="P:G protein-coupled receptor signaling pathway"/>
    <property type="evidence" value="ECO:0000247"/>
    <property type="project" value="MGI"/>
</dbReference>
<dbReference type="GO" id="GO:0007608">
    <property type="term" value="P:sensory perception of smell"/>
    <property type="evidence" value="ECO:0000247"/>
    <property type="project" value="MGI"/>
</dbReference>
<dbReference type="FunFam" id="1.20.1070.10:FF:000001">
    <property type="entry name" value="Olfactory receptor"/>
    <property type="match status" value="1"/>
</dbReference>
<dbReference type="Gene3D" id="1.20.1070.10">
    <property type="entry name" value="Rhodopsin 7-helix transmembrane proteins"/>
    <property type="match status" value="1"/>
</dbReference>
<dbReference type="InterPro" id="IPR000276">
    <property type="entry name" value="GPCR_Rhodpsn"/>
</dbReference>
<dbReference type="InterPro" id="IPR017452">
    <property type="entry name" value="GPCR_Rhodpsn_7TM"/>
</dbReference>
<dbReference type="InterPro" id="IPR000725">
    <property type="entry name" value="Olfact_rcpt"/>
</dbReference>
<dbReference type="PANTHER" id="PTHR26453">
    <property type="entry name" value="OLFACTORY RECEPTOR"/>
    <property type="match status" value="1"/>
</dbReference>
<dbReference type="Pfam" id="PF13853">
    <property type="entry name" value="7tm_4"/>
    <property type="match status" value="1"/>
</dbReference>
<dbReference type="PRINTS" id="PR00237">
    <property type="entry name" value="GPCRRHODOPSN"/>
</dbReference>
<dbReference type="PRINTS" id="PR00245">
    <property type="entry name" value="OLFACTORYR"/>
</dbReference>
<dbReference type="SUPFAM" id="SSF81321">
    <property type="entry name" value="Family A G protein-coupled receptor-like"/>
    <property type="match status" value="1"/>
</dbReference>
<dbReference type="PROSITE" id="PS50262">
    <property type="entry name" value="G_PROTEIN_RECEP_F1_2"/>
    <property type="match status" value="1"/>
</dbReference>
<sequence>MKNLSVVTQFILLGIPHTEGVETMLFVLFFSFYIFTLVGNLLILLAIVSSSRLHTPMYFFLCQLSVCDIFFPSVSSPKMLFYLSGNTPAISYAGCVSQLFFYHFLGGTECFLYTVMAYDRFVAICYPLRYSVIMSHRICAFLAMGTAVFGCIHSTFLTTLTFQLPYCGPKDVNYYFCDIPVVMKLACADTSTLEMVGFISVGLMPLSCFFFILTSYSCIVRSILQIRSTEGRHRAFSTCSAHFTAILLFYMPVIFIYLRPTPSPWLDATVQILNNLVTPMLNPLIYSLRNKEVKSSLWTVLHLLCFLPKHL</sequence>
<organism>
    <name type="scientific">Mus musculus</name>
    <name type="common">Mouse</name>
    <dbReference type="NCBI Taxonomy" id="10090"/>
    <lineage>
        <taxon>Eukaryota</taxon>
        <taxon>Metazoa</taxon>
        <taxon>Chordata</taxon>
        <taxon>Craniata</taxon>
        <taxon>Vertebrata</taxon>
        <taxon>Euteleostomi</taxon>
        <taxon>Mammalia</taxon>
        <taxon>Eutheria</taxon>
        <taxon>Euarchontoglires</taxon>
        <taxon>Glires</taxon>
        <taxon>Rodentia</taxon>
        <taxon>Myomorpha</taxon>
        <taxon>Muroidea</taxon>
        <taxon>Muridae</taxon>
        <taxon>Murinae</taxon>
        <taxon>Mus</taxon>
        <taxon>Mus</taxon>
    </lineage>
</organism>
<name>10D1B_MOUSE</name>
<gene>
    <name evidence="4" type="primary">Or10d1b</name>
    <name evidence="4" type="synonym">Mor224-8</name>
    <name evidence="4" type="synonym">Olfr149</name>
    <name type="synonym">Olfr7</name>
</gene>
<keyword id="KW-1003">Cell membrane</keyword>
<keyword id="KW-1015">Disulfide bond</keyword>
<keyword id="KW-0297">G-protein coupled receptor</keyword>
<keyword id="KW-0472">Membrane</keyword>
<keyword id="KW-0552">Olfaction</keyword>
<keyword id="KW-0675">Receptor</keyword>
<keyword id="KW-1185">Reference proteome</keyword>
<keyword id="KW-0716">Sensory transduction</keyword>
<keyword id="KW-0807">Transducer</keyword>
<keyword id="KW-0812">Transmembrane</keyword>
<keyword id="KW-1133">Transmembrane helix</keyword>